<feature type="transit peptide" description="Mitochondrion" evidence="2">
    <location>
        <begin position="1"/>
        <end position="43"/>
    </location>
</feature>
<feature type="chain" id="PRO_0000310552" description="ATP-dependent RNA helicase SUV3 homolog, mitochondrial">
    <location>
        <begin position="44"/>
        <end position="763"/>
    </location>
</feature>
<feature type="domain" description="Helicase ATP-binding" evidence="3">
    <location>
        <begin position="181"/>
        <end position="321"/>
    </location>
</feature>
<feature type="domain" description="Helicase C-terminal" evidence="4">
    <location>
        <begin position="330"/>
        <end position="508"/>
    </location>
</feature>
<feature type="region of interest" description="Disordered" evidence="5">
    <location>
        <begin position="724"/>
        <end position="763"/>
    </location>
</feature>
<feature type="compositionally biased region" description="Polar residues" evidence="5">
    <location>
        <begin position="727"/>
        <end position="741"/>
    </location>
</feature>
<feature type="binding site" evidence="3">
    <location>
        <begin position="194"/>
        <end position="201"/>
    </location>
    <ligand>
        <name>ATP</name>
        <dbReference type="ChEBI" id="CHEBI:30616"/>
    </ligand>
</feature>
<reference key="1">
    <citation type="journal article" date="2000" name="Science">
        <title>The genome sequence of Drosophila melanogaster.</title>
        <authorList>
            <person name="Adams M.D."/>
            <person name="Celniker S.E."/>
            <person name="Holt R.A."/>
            <person name="Evans C.A."/>
            <person name="Gocayne J.D."/>
            <person name="Amanatides P.G."/>
            <person name="Scherer S.E."/>
            <person name="Li P.W."/>
            <person name="Hoskins R.A."/>
            <person name="Galle R.F."/>
            <person name="George R.A."/>
            <person name="Lewis S.E."/>
            <person name="Richards S."/>
            <person name="Ashburner M."/>
            <person name="Henderson S.N."/>
            <person name="Sutton G.G."/>
            <person name="Wortman J.R."/>
            <person name="Yandell M.D."/>
            <person name="Zhang Q."/>
            <person name="Chen L.X."/>
            <person name="Brandon R.C."/>
            <person name="Rogers Y.-H.C."/>
            <person name="Blazej R.G."/>
            <person name="Champe M."/>
            <person name="Pfeiffer B.D."/>
            <person name="Wan K.H."/>
            <person name="Doyle C."/>
            <person name="Baxter E.G."/>
            <person name="Helt G."/>
            <person name="Nelson C.R."/>
            <person name="Miklos G.L.G."/>
            <person name="Abril J.F."/>
            <person name="Agbayani A."/>
            <person name="An H.-J."/>
            <person name="Andrews-Pfannkoch C."/>
            <person name="Baldwin D."/>
            <person name="Ballew R.M."/>
            <person name="Basu A."/>
            <person name="Baxendale J."/>
            <person name="Bayraktaroglu L."/>
            <person name="Beasley E.M."/>
            <person name="Beeson K.Y."/>
            <person name="Benos P.V."/>
            <person name="Berman B.P."/>
            <person name="Bhandari D."/>
            <person name="Bolshakov S."/>
            <person name="Borkova D."/>
            <person name="Botchan M.R."/>
            <person name="Bouck J."/>
            <person name="Brokstein P."/>
            <person name="Brottier P."/>
            <person name="Burtis K.C."/>
            <person name="Busam D.A."/>
            <person name="Butler H."/>
            <person name="Cadieu E."/>
            <person name="Center A."/>
            <person name="Chandra I."/>
            <person name="Cherry J.M."/>
            <person name="Cawley S."/>
            <person name="Dahlke C."/>
            <person name="Davenport L.B."/>
            <person name="Davies P."/>
            <person name="de Pablos B."/>
            <person name="Delcher A."/>
            <person name="Deng Z."/>
            <person name="Mays A.D."/>
            <person name="Dew I."/>
            <person name="Dietz S.M."/>
            <person name="Dodson K."/>
            <person name="Doup L.E."/>
            <person name="Downes M."/>
            <person name="Dugan-Rocha S."/>
            <person name="Dunkov B.C."/>
            <person name="Dunn P."/>
            <person name="Durbin K.J."/>
            <person name="Evangelista C.C."/>
            <person name="Ferraz C."/>
            <person name="Ferriera S."/>
            <person name="Fleischmann W."/>
            <person name="Fosler C."/>
            <person name="Gabrielian A.E."/>
            <person name="Garg N.S."/>
            <person name="Gelbart W.M."/>
            <person name="Glasser K."/>
            <person name="Glodek A."/>
            <person name="Gong F."/>
            <person name="Gorrell J.H."/>
            <person name="Gu Z."/>
            <person name="Guan P."/>
            <person name="Harris M."/>
            <person name="Harris N.L."/>
            <person name="Harvey D.A."/>
            <person name="Heiman T.J."/>
            <person name="Hernandez J.R."/>
            <person name="Houck J."/>
            <person name="Hostin D."/>
            <person name="Houston K.A."/>
            <person name="Howland T.J."/>
            <person name="Wei M.-H."/>
            <person name="Ibegwam C."/>
            <person name="Jalali M."/>
            <person name="Kalush F."/>
            <person name="Karpen G.H."/>
            <person name="Ke Z."/>
            <person name="Kennison J.A."/>
            <person name="Ketchum K.A."/>
            <person name="Kimmel B.E."/>
            <person name="Kodira C.D."/>
            <person name="Kraft C.L."/>
            <person name="Kravitz S."/>
            <person name="Kulp D."/>
            <person name="Lai Z."/>
            <person name="Lasko P."/>
            <person name="Lei Y."/>
            <person name="Levitsky A.A."/>
            <person name="Li J.H."/>
            <person name="Li Z."/>
            <person name="Liang Y."/>
            <person name="Lin X."/>
            <person name="Liu X."/>
            <person name="Mattei B."/>
            <person name="McIntosh T.C."/>
            <person name="McLeod M.P."/>
            <person name="McPherson D."/>
            <person name="Merkulov G."/>
            <person name="Milshina N.V."/>
            <person name="Mobarry C."/>
            <person name="Morris J."/>
            <person name="Moshrefi A."/>
            <person name="Mount S.M."/>
            <person name="Moy M."/>
            <person name="Murphy B."/>
            <person name="Murphy L."/>
            <person name="Muzny D.M."/>
            <person name="Nelson D.L."/>
            <person name="Nelson D.R."/>
            <person name="Nelson K.A."/>
            <person name="Nixon K."/>
            <person name="Nusskern D.R."/>
            <person name="Pacleb J.M."/>
            <person name="Palazzolo M."/>
            <person name="Pittman G.S."/>
            <person name="Pan S."/>
            <person name="Pollard J."/>
            <person name="Puri V."/>
            <person name="Reese M.G."/>
            <person name="Reinert K."/>
            <person name="Remington K."/>
            <person name="Saunders R.D.C."/>
            <person name="Scheeler F."/>
            <person name="Shen H."/>
            <person name="Shue B.C."/>
            <person name="Siden-Kiamos I."/>
            <person name="Simpson M."/>
            <person name="Skupski M.P."/>
            <person name="Smith T.J."/>
            <person name="Spier E."/>
            <person name="Spradling A.C."/>
            <person name="Stapleton M."/>
            <person name="Strong R."/>
            <person name="Sun E."/>
            <person name="Svirskas R."/>
            <person name="Tector C."/>
            <person name="Turner R."/>
            <person name="Venter E."/>
            <person name="Wang A.H."/>
            <person name="Wang X."/>
            <person name="Wang Z.-Y."/>
            <person name="Wassarman D.A."/>
            <person name="Weinstock G.M."/>
            <person name="Weissenbach J."/>
            <person name="Williams S.M."/>
            <person name="Woodage T."/>
            <person name="Worley K.C."/>
            <person name="Wu D."/>
            <person name="Yang S."/>
            <person name="Yao Q.A."/>
            <person name="Ye J."/>
            <person name="Yeh R.-F."/>
            <person name="Zaveri J.S."/>
            <person name="Zhan M."/>
            <person name="Zhang G."/>
            <person name="Zhao Q."/>
            <person name="Zheng L."/>
            <person name="Zheng X.H."/>
            <person name="Zhong F.N."/>
            <person name="Zhong W."/>
            <person name="Zhou X."/>
            <person name="Zhu S.C."/>
            <person name="Zhu X."/>
            <person name="Smith H.O."/>
            <person name="Gibbs R.A."/>
            <person name="Myers E.W."/>
            <person name="Rubin G.M."/>
            <person name="Venter J.C."/>
        </authorList>
    </citation>
    <scope>NUCLEOTIDE SEQUENCE [LARGE SCALE GENOMIC DNA]</scope>
    <source>
        <strain>Berkeley</strain>
    </source>
</reference>
<reference key="2">
    <citation type="journal article" date="2002" name="Genome Biol.">
        <title>Annotation of the Drosophila melanogaster euchromatic genome: a systematic review.</title>
        <authorList>
            <person name="Misra S."/>
            <person name="Crosby M.A."/>
            <person name="Mungall C.J."/>
            <person name="Matthews B.B."/>
            <person name="Campbell K.S."/>
            <person name="Hradecky P."/>
            <person name="Huang Y."/>
            <person name="Kaminker J.S."/>
            <person name="Millburn G.H."/>
            <person name="Prochnik S.E."/>
            <person name="Smith C.D."/>
            <person name="Tupy J.L."/>
            <person name="Whitfield E.J."/>
            <person name="Bayraktaroglu L."/>
            <person name="Berman B.P."/>
            <person name="Bettencourt B.R."/>
            <person name="Celniker S.E."/>
            <person name="de Grey A.D.N.J."/>
            <person name="Drysdale R.A."/>
            <person name="Harris N.L."/>
            <person name="Richter J."/>
            <person name="Russo S."/>
            <person name="Schroeder A.J."/>
            <person name="Shu S.Q."/>
            <person name="Stapleton M."/>
            <person name="Yamada C."/>
            <person name="Ashburner M."/>
            <person name="Gelbart W.M."/>
            <person name="Rubin G.M."/>
            <person name="Lewis S.E."/>
        </authorList>
    </citation>
    <scope>GENOME REANNOTATION</scope>
    <source>
        <strain>Berkeley</strain>
    </source>
</reference>
<reference key="3">
    <citation type="journal article" date="2002" name="Genome Biol.">
        <title>A Drosophila full-length cDNA resource.</title>
        <authorList>
            <person name="Stapleton M."/>
            <person name="Carlson J.W."/>
            <person name="Brokstein P."/>
            <person name="Yu C."/>
            <person name="Champe M."/>
            <person name="George R.A."/>
            <person name="Guarin H."/>
            <person name="Kronmiller B."/>
            <person name="Pacleb J.M."/>
            <person name="Park S."/>
            <person name="Wan K.H."/>
            <person name="Rubin G.M."/>
            <person name="Celniker S.E."/>
        </authorList>
    </citation>
    <scope>NUCLEOTIDE SEQUENCE [LARGE SCALE MRNA]</scope>
    <source>
        <strain>Berkeley</strain>
        <tissue>Embryo</tissue>
    </source>
</reference>
<reference evidence="9" key="4">
    <citation type="submission" date="2012-01" db="EMBL/GenBank/DDBJ databases">
        <authorList>
            <person name="Carlson J."/>
            <person name="Booth B."/>
            <person name="Frise E."/>
            <person name="Park S."/>
            <person name="Wan K."/>
            <person name="Yu C."/>
            <person name="Celniker S."/>
        </authorList>
    </citation>
    <scope>NUCLEOTIDE SEQUENCE [LARGE SCALE MRNA]</scope>
    <source>
        <strain>Berkeley</strain>
    </source>
</reference>
<reference key="5">
    <citation type="journal article" date="2015" name="Nucleic Acids Res.">
        <title>SUV3 helicase is required for correct processing of mitochondrial transcripts.</title>
        <authorList>
            <person name="Clemente P."/>
            <person name="Pajak A."/>
            <person name="Laine I."/>
            <person name="Wibom R."/>
            <person name="Wedell A."/>
            <person name="Freyer C."/>
            <person name="Wredenberg A."/>
        </authorList>
    </citation>
    <scope>FUNCTION</scope>
    <scope>SUBCELLULAR LOCATION</scope>
    <scope>DISRUPTION PHENOTYPE</scope>
</reference>
<comment type="function">
    <text evidence="1 6">Major helicase player in mitochondrial RNA metabolism and maintenance (PubMed:26152302). Likely component of the mitochondrial degradosome (mtEXO) complex, that degrades 3' overhang double-stranded RNA with a 3'-to-5' directionality in an ATP-dependent manner (By similarity). ATPase and ATP-dependent multisubstrate helicase, able to unwind double-stranded (ds) DNA and RNA, and RNA/DNA heteroduplexes in the 5'-to-3' direction (By similarity). Regulates mRNA stability and is required for the correct processing and maturation of mitochondrial transcripts (PubMed:26152302).</text>
</comment>
<comment type="catalytic activity">
    <reaction evidence="1">
        <text>ATP + H2O = ADP + phosphate + H(+)</text>
        <dbReference type="Rhea" id="RHEA:13065"/>
        <dbReference type="ChEBI" id="CHEBI:15377"/>
        <dbReference type="ChEBI" id="CHEBI:15378"/>
        <dbReference type="ChEBI" id="CHEBI:30616"/>
        <dbReference type="ChEBI" id="CHEBI:43474"/>
        <dbReference type="ChEBI" id="CHEBI:456216"/>
        <dbReference type="EC" id="3.6.4.13"/>
    </reaction>
</comment>
<comment type="cofactor">
    <cofactor evidence="1">
        <name>Mg(2+)</name>
        <dbReference type="ChEBI" id="CHEBI:18420"/>
    </cofactor>
    <cofactor evidence="1">
        <name>Mn(2+)</name>
        <dbReference type="ChEBI" id="CHEBI:29035"/>
    </cofactor>
</comment>
<comment type="subcellular location">
    <subcellularLocation>
        <location evidence="6">Mitochondrion</location>
    </subcellularLocation>
    <text evidence="6">Unlike in mammals, does not localize to the nucleus.</text>
</comment>
<comment type="disruption phenotype">
    <text evidence="6">Lethal due to mitochondrial dysfunction. 3 days after egg laying (ael) larvae display a severe decrease in size and a significant increase in mitochondrial mRNA steady-state levels which results in larval lethality by 4 days ael. RNAi-mediated knockdown is pupal lethal. Larvae display significant increases in mitochondrial mRNA and anti-sense RNA steady-state levels but rRNA (12S and 16S) steady-state levels and de novo transcription are not affected. Larvae also display severe decreases in mitochondrial tRNA steady state levels and accumulation of unprocessed precursor transcripts. These defects result in a general decrease in mitochondrial translation and severe decreases in the activity of respiratory chain complexes I, I+III, II+III and IV, whereas the nuclear encoded complex II displays a relatively small decrease. Also displays a small decrease in the peptide steady-state levels of the mitochondrial encoded subunit cox3 and the nuclear encoded subunit ND-30.</text>
</comment>
<comment type="similarity">
    <text evidence="8">Belongs to the helicase family.</text>
</comment>
<comment type="sequence caution" evidence="8">
    <conflict type="frameshift">
        <sequence resource="EMBL-CDS" id="AAL13756"/>
    </conflict>
</comment>
<organism>
    <name type="scientific">Drosophila melanogaster</name>
    <name type="common">Fruit fly</name>
    <dbReference type="NCBI Taxonomy" id="7227"/>
    <lineage>
        <taxon>Eukaryota</taxon>
        <taxon>Metazoa</taxon>
        <taxon>Ecdysozoa</taxon>
        <taxon>Arthropoda</taxon>
        <taxon>Hexapoda</taxon>
        <taxon>Insecta</taxon>
        <taxon>Pterygota</taxon>
        <taxon>Neoptera</taxon>
        <taxon>Endopterygota</taxon>
        <taxon>Diptera</taxon>
        <taxon>Brachycera</taxon>
        <taxon>Muscomorpha</taxon>
        <taxon>Ephydroidea</taxon>
        <taxon>Drosophilidae</taxon>
        <taxon>Drosophila</taxon>
        <taxon>Sophophora</taxon>
    </lineage>
</organism>
<evidence type="ECO:0000250" key="1">
    <source>
        <dbReference type="UniProtKB" id="Q8IYB8"/>
    </source>
</evidence>
<evidence type="ECO:0000255" key="2"/>
<evidence type="ECO:0000255" key="3">
    <source>
        <dbReference type="PROSITE-ProRule" id="PRU00541"/>
    </source>
</evidence>
<evidence type="ECO:0000255" key="4">
    <source>
        <dbReference type="PROSITE-ProRule" id="PRU00542"/>
    </source>
</evidence>
<evidence type="ECO:0000256" key="5">
    <source>
        <dbReference type="SAM" id="MobiDB-lite"/>
    </source>
</evidence>
<evidence type="ECO:0000269" key="6">
    <source>
    </source>
</evidence>
<evidence type="ECO:0000303" key="7">
    <source>
    </source>
</evidence>
<evidence type="ECO:0000305" key="8"/>
<evidence type="ECO:0000312" key="9">
    <source>
        <dbReference type="EMBL" id="AEX93152.1"/>
    </source>
</evidence>
<evidence type="ECO:0000312" key="10">
    <source>
        <dbReference type="FlyBase" id="FBgn0037232"/>
    </source>
</evidence>
<sequence>MQNCRRCISLTGLLRMTLYLRPSFSIDLSLRRLHRAAFLFSRKKPETNLSTLFKPVQVHAYVDSEDVGSELSGKLEKAELLKILNKFTQRREIKSLCNENGLDDYLQQQAFGSFRRFCIEAENLPVDLHITFSDITQGAGHIDDIFPYFLRHAKTVFPHLDCMDDLKKISDLRQPANWYSNARAITRKIVFHAGPTNSGKTYHAMERYLSAKTGVYCGPLKLLATEVYNKANERGTPCDLVTGEERKFGISESLPANHVACTVEMTSVNTPYEVAVIDEIQQIRDPQRGWAWTRAFLGLIADEVHVCGEPGALDLLQKICETTGETVEVRLYDRLTELTVENTALGSLDNIVPGDCIVCFSKHDIYTVSREIEARGKEVAVIYGGLPPGTKLAQAAKFNDPANSCKVMVATDAIGMGLNLSIRRIIFYSLIKPSMNERGEREIDTISVSSALQIAGRAGRFRTQWEHGYVTAFKSEDLQTLQRILARTPEPIKQAGLHPTADQIELYAYHLPSSSLSNLMDIFVNLCTVDDSLYFMCNIEDFKFLAEMIQHVALPLRARYVFCCAPINRKMPFVCSMFLKVARQYSRNEPITFDFIKKNCGWPFKLPKTILDLVHLEAVFDVMDLYLWLSYRFMDLFPEAAYVRDAQKELDEIIQQGVFQITRLLKNTEASQDGETSNYAIRRITHVKEPRLPSLSRGRLTERLLAQGLLTPGMLSELRKEWDAQQLGKSNSQSNENSEPVVNSDDEDNYSGIGRKTRKKRRK</sequence>
<dbReference type="EC" id="3.6.4.13" evidence="1"/>
<dbReference type="EMBL" id="AE014297">
    <property type="protein sequence ID" value="AAF52149.3"/>
    <property type="molecule type" value="Genomic_DNA"/>
</dbReference>
<dbReference type="EMBL" id="AE014297">
    <property type="protein sequence ID" value="ALI30527.1"/>
    <property type="molecule type" value="Genomic_DNA"/>
</dbReference>
<dbReference type="EMBL" id="AY058527">
    <property type="protein sequence ID" value="AAL13756.1"/>
    <property type="status" value="ALT_FRAME"/>
    <property type="molecule type" value="mRNA"/>
</dbReference>
<dbReference type="EMBL" id="BT133067">
    <property type="protein sequence ID" value="AEX93152.1"/>
    <property type="molecule type" value="mRNA"/>
</dbReference>
<dbReference type="RefSeq" id="NP_001303458.1">
    <property type="nucleotide sequence ID" value="NM_001316529.1"/>
</dbReference>
<dbReference type="RefSeq" id="NP_649452.3">
    <property type="nucleotide sequence ID" value="NM_141195.4"/>
</dbReference>
<dbReference type="SMR" id="Q9VN03"/>
<dbReference type="BioGRID" id="65764">
    <property type="interactions" value="3"/>
</dbReference>
<dbReference type="FunCoup" id="Q9VN03">
    <property type="interactions" value="1937"/>
</dbReference>
<dbReference type="IntAct" id="Q9VN03">
    <property type="interactions" value="2"/>
</dbReference>
<dbReference type="STRING" id="7227.FBpp0312545"/>
<dbReference type="PaxDb" id="7227-FBpp0271517"/>
<dbReference type="EnsemblMetazoa" id="FBtr0273009">
    <property type="protein sequence ID" value="FBpp0271517"/>
    <property type="gene ID" value="FBgn0037232"/>
</dbReference>
<dbReference type="EnsemblMetazoa" id="FBtr0347365">
    <property type="protein sequence ID" value="FBpp0312545"/>
    <property type="gene ID" value="FBgn0037232"/>
</dbReference>
<dbReference type="GeneID" id="40543"/>
<dbReference type="KEGG" id="dme:Dmel_CG9791"/>
<dbReference type="UCSC" id="CG9791-RC">
    <property type="organism name" value="d. melanogaster"/>
</dbReference>
<dbReference type="AGR" id="FB:FBgn0037232"/>
<dbReference type="CTD" id="40543"/>
<dbReference type="FlyBase" id="FBgn0037232">
    <property type="gene designation" value="Suv3"/>
</dbReference>
<dbReference type="VEuPathDB" id="VectorBase:FBgn0037232"/>
<dbReference type="eggNOG" id="KOG0953">
    <property type="taxonomic scope" value="Eukaryota"/>
</dbReference>
<dbReference type="GeneTree" id="ENSGT00390000003100"/>
<dbReference type="HOGENOM" id="CLU_010647_3_2_1"/>
<dbReference type="InParanoid" id="Q9VN03"/>
<dbReference type="OMA" id="QPANWYT"/>
<dbReference type="OrthoDB" id="6692397at2759"/>
<dbReference type="PhylomeDB" id="Q9VN03"/>
<dbReference type="BioGRID-ORCS" id="40543">
    <property type="hits" value="1 hit in 1 CRISPR screen"/>
</dbReference>
<dbReference type="GenomeRNAi" id="40543"/>
<dbReference type="PRO" id="PR:Q9VN03"/>
<dbReference type="Proteomes" id="UP000000803">
    <property type="component" value="Chromosome 3R"/>
</dbReference>
<dbReference type="Bgee" id="FBgn0037232">
    <property type="expression patterns" value="Expressed in mechanosensory neuron (Drosophila) in haltere and 113 other cell types or tissues"/>
</dbReference>
<dbReference type="GO" id="GO:0045025">
    <property type="term" value="C:mitochondrial degradosome"/>
    <property type="evidence" value="ECO:0000318"/>
    <property type="project" value="GO_Central"/>
</dbReference>
<dbReference type="GO" id="GO:0005759">
    <property type="term" value="C:mitochondrial matrix"/>
    <property type="evidence" value="ECO:0000250"/>
    <property type="project" value="UniProtKB"/>
</dbReference>
<dbReference type="GO" id="GO:0005739">
    <property type="term" value="C:mitochondrion"/>
    <property type="evidence" value="ECO:0000314"/>
    <property type="project" value="FlyBase"/>
</dbReference>
<dbReference type="GO" id="GO:0005524">
    <property type="term" value="F:ATP binding"/>
    <property type="evidence" value="ECO:0007669"/>
    <property type="project" value="UniProtKB-KW"/>
</dbReference>
<dbReference type="GO" id="GO:0016887">
    <property type="term" value="F:ATP hydrolysis activity"/>
    <property type="evidence" value="ECO:0007669"/>
    <property type="project" value="RHEA"/>
</dbReference>
<dbReference type="GO" id="GO:0003677">
    <property type="term" value="F:DNA binding"/>
    <property type="evidence" value="ECO:0000250"/>
    <property type="project" value="UniProtKB"/>
</dbReference>
<dbReference type="GO" id="GO:0003678">
    <property type="term" value="F:DNA helicase activity"/>
    <property type="evidence" value="ECO:0000250"/>
    <property type="project" value="UniProtKB"/>
</dbReference>
<dbReference type="GO" id="GO:0003724">
    <property type="term" value="F:RNA helicase activity"/>
    <property type="evidence" value="ECO:0007669"/>
    <property type="project" value="UniProtKB-EC"/>
</dbReference>
<dbReference type="GO" id="GO:0000958">
    <property type="term" value="P:mitochondrial mRNA catabolic process"/>
    <property type="evidence" value="ECO:0000315"/>
    <property type="project" value="FlyBase"/>
</dbReference>
<dbReference type="GO" id="GO:0097222">
    <property type="term" value="P:mitochondrial mRNA polyadenylation"/>
    <property type="evidence" value="ECO:0000315"/>
    <property type="project" value="FlyBase"/>
</dbReference>
<dbReference type="GO" id="GO:0000965">
    <property type="term" value="P:mitochondrial RNA 3'-end processing"/>
    <property type="evidence" value="ECO:0000318"/>
    <property type="project" value="GO_Central"/>
</dbReference>
<dbReference type="GO" id="GO:0000963">
    <property type="term" value="P:mitochondrial RNA processing"/>
    <property type="evidence" value="ECO:0000315"/>
    <property type="project" value="FlyBase"/>
</dbReference>
<dbReference type="GO" id="GO:0090646">
    <property type="term" value="P:mitochondrial tRNA processing"/>
    <property type="evidence" value="ECO:0000315"/>
    <property type="project" value="FlyBase"/>
</dbReference>
<dbReference type="GO" id="GO:0070131">
    <property type="term" value="P:positive regulation of mitochondrial translation"/>
    <property type="evidence" value="ECO:0000315"/>
    <property type="project" value="FlyBase"/>
</dbReference>
<dbReference type="GO" id="GO:0044528">
    <property type="term" value="P:regulation of mitochondrial mRNA stability"/>
    <property type="evidence" value="ECO:0000315"/>
    <property type="project" value="FlyBase"/>
</dbReference>
<dbReference type="CDD" id="cd17913">
    <property type="entry name" value="DEXQc_Suv3"/>
    <property type="match status" value="1"/>
</dbReference>
<dbReference type="CDD" id="cd18805">
    <property type="entry name" value="SF2_C_suv3"/>
    <property type="match status" value="1"/>
</dbReference>
<dbReference type="FunFam" id="1.10.1740.140:FF:000001">
    <property type="entry name" value="ATP-dependent RNA helicase SUPV3L1, mitochondrial"/>
    <property type="match status" value="1"/>
</dbReference>
<dbReference type="FunFam" id="1.20.58.1080:FF:000001">
    <property type="entry name" value="ATP-dependent RNA helicase SUPV3L1, mitochondrial"/>
    <property type="match status" value="1"/>
</dbReference>
<dbReference type="FunFam" id="3.40.50.300:FF:000269">
    <property type="entry name" value="ATP-dependent RNA helicase SUPV3L1, mitochondrial"/>
    <property type="match status" value="1"/>
</dbReference>
<dbReference type="FunFam" id="3.40.50.300:FF:000446">
    <property type="entry name" value="ATP-dependent RNA helicase SUPV3L1, mitochondrial"/>
    <property type="match status" value="1"/>
</dbReference>
<dbReference type="Gene3D" id="1.10.1740.140">
    <property type="match status" value="1"/>
</dbReference>
<dbReference type="Gene3D" id="1.20.272.40">
    <property type="match status" value="1"/>
</dbReference>
<dbReference type="Gene3D" id="1.20.58.1080">
    <property type="match status" value="1"/>
</dbReference>
<dbReference type="Gene3D" id="3.40.50.300">
    <property type="entry name" value="P-loop containing nucleotide triphosphate hydrolases"/>
    <property type="match status" value="2"/>
</dbReference>
<dbReference type="InterPro" id="IPR055206">
    <property type="entry name" value="DEXQc_SUV3"/>
</dbReference>
<dbReference type="InterPro" id="IPR001650">
    <property type="entry name" value="Helicase_C-like"/>
</dbReference>
<dbReference type="InterPro" id="IPR027417">
    <property type="entry name" value="P-loop_NTPase"/>
</dbReference>
<dbReference type="InterPro" id="IPR050699">
    <property type="entry name" value="RNA-DNA_Helicase"/>
</dbReference>
<dbReference type="InterPro" id="IPR022192">
    <property type="entry name" value="SUV3_C"/>
</dbReference>
<dbReference type="InterPro" id="IPR041082">
    <property type="entry name" value="Suv3_C_1"/>
</dbReference>
<dbReference type="InterPro" id="IPR044774">
    <property type="entry name" value="Suv3_DEXQc"/>
</dbReference>
<dbReference type="InterPro" id="IPR041453">
    <property type="entry name" value="Suv3_N"/>
</dbReference>
<dbReference type="PANTHER" id="PTHR12131">
    <property type="entry name" value="ATP-DEPENDENT RNA AND DNA HELICASE"/>
    <property type="match status" value="1"/>
</dbReference>
<dbReference type="PANTHER" id="PTHR12131:SF1">
    <property type="entry name" value="ATP-DEPENDENT RNA HELICASE SUPV3L1, MITOCHONDRIAL-RELATED"/>
    <property type="match status" value="1"/>
</dbReference>
<dbReference type="Pfam" id="PF22527">
    <property type="entry name" value="DEXQc_Suv3"/>
    <property type="match status" value="1"/>
</dbReference>
<dbReference type="Pfam" id="PF00271">
    <property type="entry name" value="Helicase_C"/>
    <property type="match status" value="1"/>
</dbReference>
<dbReference type="Pfam" id="PF12513">
    <property type="entry name" value="SUV3_C"/>
    <property type="match status" value="1"/>
</dbReference>
<dbReference type="Pfam" id="PF18147">
    <property type="entry name" value="Suv3_C_1"/>
    <property type="match status" value="1"/>
</dbReference>
<dbReference type="Pfam" id="PF18114">
    <property type="entry name" value="Suv3_N"/>
    <property type="match status" value="1"/>
</dbReference>
<dbReference type="SMART" id="SM00490">
    <property type="entry name" value="HELICc"/>
    <property type="match status" value="1"/>
</dbReference>
<dbReference type="SUPFAM" id="SSF52540">
    <property type="entry name" value="P-loop containing nucleoside triphosphate hydrolases"/>
    <property type="match status" value="2"/>
</dbReference>
<dbReference type="PROSITE" id="PS51192">
    <property type="entry name" value="HELICASE_ATP_BIND_1"/>
    <property type="match status" value="1"/>
</dbReference>
<dbReference type="PROSITE" id="PS51194">
    <property type="entry name" value="HELICASE_CTER"/>
    <property type="match status" value="1"/>
</dbReference>
<name>SUV3_DROME</name>
<protein>
    <recommendedName>
        <fullName evidence="7">ATP-dependent RNA helicase SUV3 homolog, mitochondrial</fullName>
        <ecNumber evidence="1">3.6.4.13</ecNumber>
    </recommendedName>
</protein>
<proteinExistence type="evidence at transcript level"/>
<gene>
    <name evidence="10" type="primary">Suv3</name>
    <name evidence="10" type="ORF">CG9791</name>
</gene>
<keyword id="KW-0067">ATP-binding</keyword>
<keyword id="KW-0347">Helicase</keyword>
<keyword id="KW-0378">Hydrolase</keyword>
<keyword id="KW-0496">Mitochondrion</keyword>
<keyword id="KW-0547">Nucleotide-binding</keyword>
<keyword id="KW-1185">Reference proteome</keyword>
<keyword id="KW-0809">Transit peptide</keyword>
<accession>Q9VN03</accession>
<accession>H1UUI2</accession>
<accession>Q95TU1</accession>